<feature type="chain" id="PRO_0000266387" description="Guanylate kinase">
    <location>
        <begin position="1"/>
        <end position="218"/>
    </location>
</feature>
<feature type="domain" description="Guanylate kinase-like" evidence="1">
    <location>
        <begin position="15"/>
        <end position="194"/>
    </location>
</feature>
<feature type="binding site" evidence="1">
    <location>
        <begin position="22"/>
        <end position="29"/>
    </location>
    <ligand>
        <name>ATP</name>
        <dbReference type="ChEBI" id="CHEBI:30616"/>
    </ligand>
</feature>
<organism>
    <name type="scientific">Rhodospirillum rubrum (strain ATCC 11170 / ATH 1.1.1 / DSM 467 / LMG 4362 / NCIMB 8255 / S1)</name>
    <dbReference type="NCBI Taxonomy" id="269796"/>
    <lineage>
        <taxon>Bacteria</taxon>
        <taxon>Pseudomonadati</taxon>
        <taxon>Pseudomonadota</taxon>
        <taxon>Alphaproteobacteria</taxon>
        <taxon>Rhodospirillales</taxon>
        <taxon>Rhodospirillaceae</taxon>
        <taxon>Rhodospirillum</taxon>
    </lineage>
</organism>
<sequence>MSAPSSAPALIPRRGMMLVLSSPSGAGKTTISRALLAEEDGLEMSVSVTTRAPRPGERDGEHYHFIDVARYMALTKDDGLLEHARVFENYYGTPRAPVEAALARGCDVLFDIDWQGTQQVAEKARTDLVSIFILPPSVGELERRLKGRAQDSDAVVAARMAKAMDEISHYFEYDYIIVNDDLDRSIADVRAILRAERLKRARRIGLAEFVNRMRGAGE</sequence>
<comment type="function">
    <text evidence="1">Essential for recycling GMP and indirectly, cGMP.</text>
</comment>
<comment type="catalytic activity">
    <reaction evidence="1">
        <text>GMP + ATP = GDP + ADP</text>
        <dbReference type="Rhea" id="RHEA:20780"/>
        <dbReference type="ChEBI" id="CHEBI:30616"/>
        <dbReference type="ChEBI" id="CHEBI:58115"/>
        <dbReference type="ChEBI" id="CHEBI:58189"/>
        <dbReference type="ChEBI" id="CHEBI:456216"/>
        <dbReference type="EC" id="2.7.4.8"/>
    </reaction>
</comment>
<comment type="subcellular location">
    <subcellularLocation>
        <location evidence="1">Cytoplasm</location>
    </subcellularLocation>
</comment>
<comment type="similarity">
    <text evidence="1">Belongs to the guanylate kinase family.</text>
</comment>
<accession>Q2RXB1</accession>
<evidence type="ECO:0000255" key="1">
    <source>
        <dbReference type="HAMAP-Rule" id="MF_00328"/>
    </source>
</evidence>
<dbReference type="EC" id="2.7.4.8" evidence="1"/>
<dbReference type="EMBL" id="CP000230">
    <property type="protein sequence ID" value="ABC21234.1"/>
    <property type="molecule type" value="Genomic_DNA"/>
</dbReference>
<dbReference type="RefSeq" id="WP_011388188.1">
    <property type="nucleotide sequence ID" value="NC_007643.1"/>
</dbReference>
<dbReference type="RefSeq" id="YP_425521.1">
    <property type="nucleotide sequence ID" value="NC_007643.1"/>
</dbReference>
<dbReference type="SMR" id="Q2RXB1"/>
<dbReference type="STRING" id="269796.Rru_A0429"/>
<dbReference type="EnsemblBacteria" id="ABC21234">
    <property type="protein sequence ID" value="ABC21234"/>
    <property type="gene ID" value="Rru_A0429"/>
</dbReference>
<dbReference type="KEGG" id="rru:Rru_A0429"/>
<dbReference type="PATRIC" id="fig|269796.9.peg.485"/>
<dbReference type="eggNOG" id="COG0194">
    <property type="taxonomic scope" value="Bacteria"/>
</dbReference>
<dbReference type="HOGENOM" id="CLU_001715_1_0_5"/>
<dbReference type="PhylomeDB" id="Q2RXB1"/>
<dbReference type="Proteomes" id="UP000001929">
    <property type="component" value="Chromosome"/>
</dbReference>
<dbReference type="GO" id="GO:0005829">
    <property type="term" value="C:cytosol"/>
    <property type="evidence" value="ECO:0007669"/>
    <property type="project" value="TreeGrafter"/>
</dbReference>
<dbReference type="GO" id="GO:0005524">
    <property type="term" value="F:ATP binding"/>
    <property type="evidence" value="ECO:0007669"/>
    <property type="project" value="UniProtKB-UniRule"/>
</dbReference>
<dbReference type="GO" id="GO:0004385">
    <property type="term" value="F:guanylate kinase activity"/>
    <property type="evidence" value="ECO:0007669"/>
    <property type="project" value="UniProtKB-UniRule"/>
</dbReference>
<dbReference type="CDD" id="cd00071">
    <property type="entry name" value="GMPK"/>
    <property type="match status" value="1"/>
</dbReference>
<dbReference type="FunFam" id="3.30.63.10:FF:000005">
    <property type="entry name" value="Guanylate kinase"/>
    <property type="match status" value="1"/>
</dbReference>
<dbReference type="Gene3D" id="3.30.63.10">
    <property type="entry name" value="Guanylate Kinase phosphate binding domain"/>
    <property type="match status" value="1"/>
</dbReference>
<dbReference type="Gene3D" id="3.40.50.300">
    <property type="entry name" value="P-loop containing nucleotide triphosphate hydrolases"/>
    <property type="match status" value="1"/>
</dbReference>
<dbReference type="HAMAP" id="MF_00328">
    <property type="entry name" value="Guanylate_kinase"/>
    <property type="match status" value="1"/>
</dbReference>
<dbReference type="InterPro" id="IPR008145">
    <property type="entry name" value="GK/Ca_channel_bsu"/>
</dbReference>
<dbReference type="InterPro" id="IPR008144">
    <property type="entry name" value="Guanylate_kin-like_dom"/>
</dbReference>
<dbReference type="InterPro" id="IPR017665">
    <property type="entry name" value="Guanylate_kinase"/>
</dbReference>
<dbReference type="InterPro" id="IPR020590">
    <property type="entry name" value="Guanylate_kinase_CS"/>
</dbReference>
<dbReference type="InterPro" id="IPR027417">
    <property type="entry name" value="P-loop_NTPase"/>
</dbReference>
<dbReference type="NCBIfam" id="TIGR03263">
    <property type="entry name" value="guanyl_kin"/>
    <property type="match status" value="1"/>
</dbReference>
<dbReference type="PANTHER" id="PTHR23117:SF13">
    <property type="entry name" value="GUANYLATE KINASE"/>
    <property type="match status" value="1"/>
</dbReference>
<dbReference type="PANTHER" id="PTHR23117">
    <property type="entry name" value="GUANYLATE KINASE-RELATED"/>
    <property type="match status" value="1"/>
</dbReference>
<dbReference type="Pfam" id="PF00625">
    <property type="entry name" value="Guanylate_kin"/>
    <property type="match status" value="1"/>
</dbReference>
<dbReference type="SMART" id="SM00072">
    <property type="entry name" value="GuKc"/>
    <property type="match status" value="1"/>
</dbReference>
<dbReference type="SUPFAM" id="SSF52540">
    <property type="entry name" value="P-loop containing nucleoside triphosphate hydrolases"/>
    <property type="match status" value="1"/>
</dbReference>
<dbReference type="PROSITE" id="PS00856">
    <property type="entry name" value="GUANYLATE_KINASE_1"/>
    <property type="match status" value="1"/>
</dbReference>
<dbReference type="PROSITE" id="PS50052">
    <property type="entry name" value="GUANYLATE_KINASE_2"/>
    <property type="match status" value="1"/>
</dbReference>
<keyword id="KW-0067">ATP-binding</keyword>
<keyword id="KW-0963">Cytoplasm</keyword>
<keyword id="KW-0418">Kinase</keyword>
<keyword id="KW-0547">Nucleotide-binding</keyword>
<keyword id="KW-1185">Reference proteome</keyword>
<keyword id="KW-0808">Transferase</keyword>
<protein>
    <recommendedName>
        <fullName evidence="1">Guanylate kinase</fullName>
        <ecNumber evidence="1">2.7.4.8</ecNumber>
    </recommendedName>
    <alternativeName>
        <fullName evidence="1">GMP kinase</fullName>
    </alternativeName>
</protein>
<reference key="1">
    <citation type="journal article" date="2011" name="Stand. Genomic Sci.">
        <title>Complete genome sequence of Rhodospirillum rubrum type strain (S1).</title>
        <authorList>
            <person name="Munk A.C."/>
            <person name="Copeland A."/>
            <person name="Lucas S."/>
            <person name="Lapidus A."/>
            <person name="Del Rio T.G."/>
            <person name="Barry K."/>
            <person name="Detter J.C."/>
            <person name="Hammon N."/>
            <person name="Israni S."/>
            <person name="Pitluck S."/>
            <person name="Brettin T."/>
            <person name="Bruce D."/>
            <person name="Han C."/>
            <person name="Tapia R."/>
            <person name="Gilna P."/>
            <person name="Schmutz J."/>
            <person name="Larimer F."/>
            <person name="Land M."/>
            <person name="Kyrpides N.C."/>
            <person name="Mavromatis K."/>
            <person name="Richardson P."/>
            <person name="Rohde M."/>
            <person name="Goeker M."/>
            <person name="Klenk H.P."/>
            <person name="Zhang Y."/>
            <person name="Roberts G.P."/>
            <person name="Reslewic S."/>
            <person name="Schwartz D.C."/>
        </authorList>
    </citation>
    <scope>NUCLEOTIDE SEQUENCE [LARGE SCALE GENOMIC DNA]</scope>
    <source>
        <strain>ATCC 11170 / ATH 1.1.1 / DSM 467 / LMG 4362 / NCIMB 8255 / S1</strain>
    </source>
</reference>
<proteinExistence type="inferred from homology"/>
<name>KGUA_RHORT</name>
<gene>
    <name evidence="1" type="primary">gmk</name>
    <name type="ordered locus">Rru_A0429</name>
</gene>